<accession>Q9PEC1</accession>
<keyword id="KW-0028">Amino-acid biosynthesis</keyword>
<keyword id="KW-0055">Arginine biosynthesis</keyword>
<keyword id="KW-0067">ATP-binding</keyword>
<keyword id="KW-0436">Ligase</keyword>
<keyword id="KW-0460">Magnesium</keyword>
<keyword id="KW-0464">Manganese</keyword>
<keyword id="KW-0479">Metal-binding</keyword>
<keyword id="KW-0547">Nucleotide-binding</keyword>
<keyword id="KW-0665">Pyrimidine biosynthesis</keyword>
<keyword id="KW-0677">Repeat</keyword>
<name>CARB_XYLFA</name>
<comment type="function">
    <text evidence="1">Large subunit of the glutamine-dependent carbamoyl phosphate synthetase (CPSase). CPSase catalyzes the formation of carbamoyl phosphate from the ammonia moiety of glutamine, carbonate, and phosphate donated by ATP, constituting the first step of 2 biosynthetic pathways, one leading to arginine and/or urea and the other to pyrimidine nucleotides. The large subunit (synthetase) binds the substrates ammonia (free or transferred from glutamine from the small subunit), hydrogencarbonate and ATP and carries out an ATP-coupled ligase reaction, activating hydrogencarbonate by forming carboxy phosphate which reacts with ammonia to form carbamoyl phosphate.</text>
</comment>
<comment type="catalytic activity">
    <reaction evidence="1">
        <text>hydrogencarbonate + L-glutamine + 2 ATP + H2O = carbamoyl phosphate + L-glutamate + 2 ADP + phosphate + 2 H(+)</text>
        <dbReference type="Rhea" id="RHEA:18633"/>
        <dbReference type="ChEBI" id="CHEBI:15377"/>
        <dbReference type="ChEBI" id="CHEBI:15378"/>
        <dbReference type="ChEBI" id="CHEBI:17544"/>
        <dbReference type="ChEBI" id="CHEBI:29985"/>
        <dbReference type="ChEBI" id="CHEBI:30616"/>
        <dbReference type="ChEBI" id="CHEBI:43474"/>
        <dbReference type="ChEBI" id="CHEBI:58228"/>
        <dbReference type="ChEBI" id="CHEBI:58359"/>
        <dbReference type="ChEBI" id="CHEBI:456216"/>
        <dbReference type="EC" id="6.3.5.5"/>
    </reaction>
</comment>
<comment type="catalytic activity">
    <molecule>Carbamoyl phosphate synthase large chain</molecule>
    <reaction evidence="1">
        <text>hydrogencarbonate + NH4(+) + 2 ATP = carbamoyl phosphate + 2 ADP + phosphate + 2 H(+)</text>
        <dbReference type="Rhea" id="RHEA:18029"/>
        <dbReference type="ChEBI" id="CHEBI:15378"/>
        <dbReference type="ChEBI" id="CHEBI:17544"/>
        <dbReference type="ChEBI" id="CHEBI:28938"/>
        <dbReference type="ChEBI" id="CHEBI:30616"/>
        <dbReference type="ChEBI" id="CHEBI:43474"/>
        <dbReference type="ChEBI" id="CHEBI:58228"/>
        <dbReference type="ChEBI" id="CHEBI:456216"/>
        <dbReference type="EC" id="6.3.4.16"/>
    </reaction>
</comment>
<comment type="cofactor">
    <cofactor evidence="1">
        <name>Mg(2+)</name>
        <dbReference type="ChEBI" id="CHEBI:18420"/>
    </cofactor>
    <cofactor evidence="1">
        <name>Mn(2+)</name>
        <dbReference type="ChEBI" id="CHEBI:29035"/>
    </cofactor>
    <text evidence="1">Binds 4 Mg(2+) or Mn(2+) ions per subunit.</text>
</comment>
<comment type="pathway">
    <text evidence="1">Amino-acid biosynthesis; L-arginine biosynthesis; carbamoyl phosphate from bicarbonate: step 1/1.</text>
</comment>
<comment type="pathway">
    <text evidence="1">Pyrimidine metabolism; UMP biosynthesis via de novo pathway; (S)-dihydroorotate from bicarbonate: step 1/3.</text>
</comment>
<comment type="subunit">
    <text evidence="1">Composed of two chains; the small (or glutamine) chain promotes the hydrolysis of glutamine to ammonia, which is used by the large (or ammonia) chain to synthesize carbamoyl phosphate. Tetramer of heterodimers (alpha,beta)4.</text>
</comment>
<comment type="domain">
    <text evidence="1">The large subunit is composed of 2 ATP-grasp domains that are involved in binding the 2 ATP molecules needed for carbamoyl phosphate synthesis. The N-terminal ATP-grasp domain (referred to as the carboxyphosphate synthetic component) catalyzes the ATP-dependent phosphorylation of hydrogencarbonate to carboxyphosphate and the subsequent nucleophilic attack by ammonia to form a carbamate intermediate. The C-terminal ATP-grasp domain (referred to as the carbamoyl phosphate synthetic component) then catalyzes the phosphorylation of carbamate with the second ATP to form the end product carbamoyl phosphate. The reactive and unstable enzyme intermediates are sequentially channeled from one active site to the next through the interior of the protein over a distance of at least 96 A.</text>
</comment>
<comment type="similarity">
    <text evidence="1">Belongs to the CarB family.</text>
</comment>
<feature type="chain" id="PRO_0000145067" description="Carbamoyl phosphate synthase large chain">
    <location>
        <begin position="1"/>
        <end position="1080"/>
    </location>
</feature>
<feature type="domain" description="ATP-grasp 1" evidence="1">
    <location>
        <begin position="133"/>
        <end position="328"/>
    </location>
</feature>
<feature type="domain" description="ATP-grasp 2" evidence="1">
    <location>
        <begin position="679"/>
        <end position="876"/>
    </location>
</feature>
<feature type="domain" description="MGS-like" evidence="1">
    <location>
        <begin position="943"/>
        <end position="1080"/>
    </location>
</feature>
<feature type="region of interest" description="Carboxyphosphate synthetic domain" evidence="1">
    <location>
        <begin position="1"/>
        <end position="403"/>
    </location>
</feature>
<feature type="region of interest" description="Oligomerization domain" evidence="1">
    <location>
        <begin position="404"/>
        <end position="554"/>
    </location>
</feature>
<feature type="region of interest" description="Carbamoyl phosphate synthetic domain" evidence="1">
    <location>
        <begin position="555"/>
        <end position="942"/>
    </location>
</feature>
<feature type="region of interest" description="Allosteric domain" evidence="1">
    <location>
        <begin position="943"/>
        <end position="1080"/>
    </location>
</feature>
<feature type="binding site" evidence="1">
    <location>
        <position position="129"/>
    </location>
    <ligand>
        <name>ATP</name>
        <dbReference type="ChEBI" id="CHEBI:30616"/>
        <label>1</label>
    </ligand>
</feature>
<feature type="binding site" evidence="1">
    <location>
        <position position="169"/>
    </location>
    <ligand>
        <name>ATP</name>
        <dbReference type="ChEBI" id="CHEBI:30616"/>
        <label>1</label>
    </ligand>
</feature>
<feature type="binding site" evidence="1">
    <location>
        <position position="175"/>
    </location>
    <ligand>
        <name>ATP</name>
        <dbReference type="ChEBI" id="CHEBI:30616"/>
        <label>1</label>
    </ligand>
</feature>
<feature type="binding site" evidence="1">
    <location>
        <position position="176"/>
    </location>
    <ligand>
        <name>ATP</name>
        <dbReference type="ChEBI" id="CHEBI:30616"/>
        <label>1</label>
    </ligand>
</feature>
<feature type="binding site" evidence="1">
    <location>
        <position position="208"/>
    </location>
    <ligand>
        <name>ATP</name>
        <dbReference type="ChEBI" id="CHEBI:30616"/>
        <label>1</label>
    </ligand>
</feature>
<feature type="binding site" evidence="1">
    <location>
        <position position="210"/>
    </location>
    <ligand>
        <name>ATP</name>
        <dbReference type="ChEBI" id="CHEBI:30616"/>
        <label>1</label>
    </ligand>
</feature>
<feature type="binding site" evidence="1">
    <location>
        <position position="215"/>
    </location>
    <ligand>
        <name>ATP</name>
        <dbReference type="ChEBI" id="CHEBI:30616"/>
        <label>1</label>
    </ligand>
</feature>
<feature type="binding site" evidence="1">
    <location>
        <position position="241"/>
    </location>
    <ligand>
        <name>ATP</name>
        <dbReference type="ChEBI" id="CHEBI:30616"/>
        <label>1</label>
    </ligand>
</feature>
<feature type="binding site" evidence="1">
    <location>
        <position position="242"/>
    </location>
    <ligand>
        <name>ATP</name>
        <dbReference type="ChEBI" id="CHEBI:30616"/>
        <label>1</label>
    </ligand>
</feature>
<feature type="binding site" evidence="1">
    <location>
        <position position="243"/>
    </location>
    <ligand>
        <name>ATP</name>
        <dbReference type="ChEBI" id="CHEBI:30616"/>
        <label>1</label>
    </ligand>
</feature>
<feature type="binding site" evidence="1">
    <location>
        <position position="285"/>
    </location>
    <ligand>
        <name>ATP</name>
        <dbReference type="ChEBI" id="CHEBI:30616"/>
        <label>1</label>
    </ligand>
</feature>
<feature type="binding site" evidence="1">
    <location>
        <position position="285"/>
    </location>
    <ligand>
        <name>Mg(2+)</name>
        <dbReference type="ChEBI" id="CHEBI:18420"/>
        <label>1</label>
    </ligand>
</feature>
<feature type="binding site" evidence="1">
    <location>
        <position position="285"/>
    </location>
    <ligand>
        <name>Mn(2+)</name>
        <dbReference type="ChEBI" id="CHEBI:29035"/>
        <label>1</label>
    </ligand>
</feature>
<feature type="binding site" evidence="1">
    <location>
        <position position="299"/>
    </location>
    <ligand>
        <name>ATP</name>
        <dbReference type="ChEBI" id="CHEBI:30616"/>
        <label>1</label>
    </ligand>
</feature>
<feature type="binding site" evidence="1">
    <location>
        <position position="299"/>
    </location>
    <ligand>
        <name>Mg(2+)</name>
        <dbReference type="ChEBI" id="CHEBI:18420"/>
        <label>1</label>
    </ligand>
</feature>
<feature type="binding site" evidence="1">
    <location>
        <position position="299"/>
    </location>
    <ligand>
        <name>Mg(2+)</name>
        <dbReference type="ChEBI" id="CHEBI:18420"/>
        <label>2</label>
    </ligand>
</feature>
<feature type="binding site" evidence="1">
    <location>
        <position position="299"/>
    </location>
    <ligand>
        <name>Mn(2+)</name>
        <dbReference type="ChEBI" id="CHEBI:29035"/>
        <label>1</label>
    </ligand>
</feature>
<feature type="binding site" evidence="1">
    <location>
        <position position="299"/>
    </location>
    <ligand>
        <name>Mn(2+)</name>
        <dbReference type="ChEBI" id="CHEBI:29035"/>
        <label>2</label>
    </ligand>
</feature>
<feature type="binding site" evidence="1">
    <location>
        <position position="301"/>
    </location>
    <ligand>
        <name>Mg(2+)</name>
        <dbReference type="ChEBI" id="CHEBI:18420"/>
        <label>2</label>
    </ligand>
</feature>
<feature type="binding site" evidence="1">
    <location>
        <position position="301"/>
    </location>
    <ligand>
        <name>Mn(2+)</name>
        <dbReference type="ChEBI" id="CHEBI:29035"/>
        <label>2</label>
    </ligand>
</feature>
<feature type="binding site" evidence="1">
    <location>
        <position position="715"/>
    </location>
    <ligand>
        <name>ATP</name>
        <dbReference type="ChEBI" id="CHEBI:30616"/>
        <label>2</label>
    </ligand>
</feature>
<feature type="binding site" evidence="1">
    <location>
        <position position="754"/>
    </location>
    <ligand>
        <name>ATP</name>
        <dbReference type="ChEBI" id="CHEBI:30616"/>
        <label>2</label>
    </ligand>
</feature>
<feature type="binding site" evidence="1">
    <location>
        <position position="756"/>
    </location>
    <ligand>
        <name>ATP</name>
        <dbReference type="ChEBI" id="CHEBI:30616"/>
        <label>2</label>
    </ligand>
</feature>
<feature type="binding site" evidence="1">
    <location>
        <position position="761"/>
    </location>
    <ligand>
        <name>ATP</name>
        <dbReference type="ChEBI" id="CHEBI:30616"/>
        <label>2</label>
    </ligand>
</feature>
<feature type="binding site" evidence="1">
    <location>
        <position position="787"/>
    </location>
    <ligand>
        <name>ATP</name>
        <dbReference type="ChEBI" id="CHEBI:30616"/>
        <label>2</label>
    </ligand>
</feature>
<feature type="binding site" evidence="1">
    <location>
        <position position="788"/>
    </location>
    <ligand>
        <name>ATP</name>
        <dbReference type="ChEBI" id="CHEBI:30616"/>
        <label>2</label>
    </ligand>
</feature>
<feature type="binding site" evidence="1">
    <location>
        <position position="789"/>
    </location>
    <ligand>
        <name>ATP</name>
        <dbReference type="ChEBI" id="CHEBI:30616"/>
        <label>2</label>
    </ligand>
</feature>
<feature type="binding site" evidence="1">
    <location>
        <position position="790"/>
    </location>
    <ligand>
        <name>ATP</name>
        <dbReference type="ChEBI" id="CHEBI:30616"/>
        <label>2</label>
    </ligand>
</feature>
<feature type="binding site" evidence="1">
    <location>
        <position position="830"/>
    </location>
    <ligand>
        <name>ATP</name>
        <dbReference type="ChEBI" id="CHEBI:30616"/>
        <label>2</label>
    </ligand>
</feature>
<feature type="binding site" evidence="1">
    <location>
        <position position="830"/>
    </location>
    <ligand>
        <name>Mg(2+)</name>
        <dbReference type="ChEBI" id="CHEBI:18420"/>
        <label>3</label>
    </ligand>
</feature>
<feature type="binding site" evidence="1">
    <location>
        <position position="830"/>
    </location>
    <ligand>
        <name>Mn(2+)</name>
        <dbReference type="ChEBI" id="CHEBI:29035"/>
        <label>3</label>
    </ligand>
</feature>
<feature type="binding site" evidence="1">
    <location>
        <position position="847"/>
    </location>
    <ligand>
        <name>ATP</name>
        <dbReference type="ChEBI" id="CHEBI:30616"/>
        <label>2</label>
    </ligand>
</feature>
<feature type="binding site" evidence="1">
    <location>
        <position position="847"/>
    </location>
    <ligand>
        <name>Mg(2+)</name>
        <dbReference type="ChEBI" id="CHEBI:18420"/>
        <label>3</label>
    </ligand>
</feature>
<feature type="binding site" evidence="1">
    <location>
        <position position="847"/>
    </location>
    <ligand>
        <name>Mg(2+)</name>
        <dbReference type="ChEBI" id="CHEBI:18420"/>
        <label>4</label>
    </ligand>
</feature>
<feature type="binding site" evidence="1">
    <location>
        <position position="847"/>
    </location>
    <ligand>
        <name>Mn(2+)</name>
        <dbReference type="ChEBI" id="CHEBI:29035"/>
        <label>3</label>
    </ligand>
</feature>
<feature type="binding site" evidence="1">
    <location>
        <position position="847"/>
    </location>
    <ligand>
        <name>Mn(2+)</name>
        <dbReference type="ChEBI" id="CHEBI:29035"/>
        <label>4</label>
    </ligand>
</feature>
<feature type="binding site" evidence="1">
    <location>
        <position position="849"/>
    </location>
    <ligand>
        <name>Mg(2+)</name>
        <dbReference type="ChEBI" id="CHEBI:18420"/>
        <label>4</label>
    </ligand>
</feature>
<feature type="binding site" evidence="1">
    <location>
        <position position="849"/>
    </location>
    <ligand>
        <name>Mn(2+)</name>
        <dbReference type="ChEBI" id="CHEBI:29035"/>
        <label>4</label>
    </ligand>
</feature>
<dbReference type="EC" id="6.3.4.16" evidence="1"/>
<dbReference type="EC" id="6.3.5.5" evidence="1"/>
<dbReference type="EMBL" id="AE003849">
    <property type="protein sequence ID" value="AAF83917.1"/>
    <property type="molecule type" value="Genomic_DNA"/>
</dbReference>
<dbReference type="PIR" id="C82723">
    <property type="entry name" value="C82723"/>
</dbReference>
<dbReference type="RefSeq" id="WP_010893624.1">
    <property type="nucleotide sequence ID" value="NC_002488.3"/>
</dbReference>
<dbReference type="SMR" id="Q9PEC1"/>
<dbReference type="STRING" id="160492.XF_1107"/>
<dbReference type="KEGG" id="xfa:XF_1107"/>
<dbReference type="PATRIC" id="fig|160492.11.peg.1174"/>
<dbReference type="eggNOG" id="COG0458">
    <property type="taxonomic scope" value="Bacteria"/>
</dbReference>
<dbReference type="HOGENOM" id="CLU_000513_1_0_6"/>
<dbReference type="UniPathway" id="UPA00068">
    <property type="reaction ID" value="UER00171"/>
</dbReference>
<dbReference type="UniPathway" id="UPA00070">
    <property type="reaction ID" value="UER00115"/>
</dbReference>
<dbReference type="Proteomes" id="UP000000812">
    <property type="component" value="Chromosome"/>
</dbReference>
<dbReference type="GO" id="GO:0005737">
    <property type="term" value="C:cytoplasm"/>
    <property type="evidence" value="ECO:0007669"/>
    <property type="project" value="TreeGrafter"/>
</dbReference>
<dbReference type="GO" id="GO:0005524">
    <property type="term" value="F:ATP binding"/>
    <property type="evidence" value="ECO:0007669"/>
    <property type="project" value="UniProtKB-UniRule"/>
</dbReference>
<dbReference type="GO" id="GO:0004087">
    <property type="term" value="F:carbamoyl-phosphate synthase (ammonia) activity"/>
    <property type="evidence" value="ECO:0007669"/>
    <property type="project" value="RHEA"/>
</dbReference>
<dbReference type="GO" id="GO:0004088">
    <property type="term" value="F:carbamoyl-phosphate synthase (glutamine-hydrolyzing) activity"/>
    <property type="evidence" value="ECO:0007669"/>
    <property type="project" value="UniProtKB-UniRule"/>
</dbReference>
<dbReference type="GO" id="GO:0046872">
    <property type="term" value="F:metal ion binding"/>
    <property type="evidence" value="ECO:0007669"/>
    <property type="project" value="UniProtKB-KW"/>
</dbReference>
<dbReference type="GO" id="GO:0044205">
    <property type="term" value="P:'de novo' UMP biosynthetic process"/>
    <property type="evidence" value="ECO:0007669"/>
    <property type="project" value="UniProtKB-UniRule"/>
</dbReference>
<dbReference type="GO" id="GO:0006541">
    <property type="term" value="P:glutamine metabolic process"/>
    <property type="evidence" value="ECO:0007669"/>
    <property type="project" value="TreeGrafter"/>
</dbReference>
<dbReference type="GO" id="GO:0006526">
    <property type="term" value="P:L-arginine biosynthetic process"/>
    <property type="evidence" value="ECO:0007669"/>
    <property type="project" value="UniProtKB-UniRule"/>
</dbReference>
<dbReference type="CDD" id="cd01424">
    <property type="entry name" value="MGS_CPS_II"/>
    <property type="match status" value="1"/>
</dbReference>
<dbReference type="FunFam" id="1.10.1030.10:FF:000002">
    <property type="entry name" value="Carbamoyl-phosphate synthase large chain"/>
    <property type="match status" value="1"/>
</dbReference>
<dbReference type="FunFam" id="3.30.1490.20:FF:000001">
    <property type="entry name" value="Carbamoyl-phosphate synthase large chain"/>
    <property type="match status" value="1"/>
</dbReference>
<dbReference type="FunFam" id="3.30.470.20:FF:000007">
    <property type="entry name" value="Carbamoyl-phosphate synthase large chain"/>
    <property type="match status" value="1"/>
</dbReference>
<dbReference type="FunFam" id="3.30.470.20:FF:000013">
    <property type="entry name" value="Carbamoyl-phosphate synthase large chain"/>
    <property type="match status" value="1"/>
</dbReference>
<dbReference type="FunFam" id="3.40.50.20:FF:000001">
    <property type="entry name" value="Carbamoyl-phosphate synthase large chain"/>
    <property type="match status" value="1"/>
</dbReference>
<dbReference type="FunFam" id="3.40.50.20:FF:000003">
    <property type="entry name" value="Carbamoyl-phosphate synthase large chain"/>
    <property type="match status" value="1"/>
</dbReference>
<dbReference type="Gene3D" id="3.40.50.20">
    <property type="match status" value="2"/>
</dbReference>
<dbReference type="Gene3D" id="3.30.470.20">
    <property type="entry name" value="ATP-grasp fold, B domain"/>
    <property type="match status" value="2"/>
</dbReference>
<dbReference type="Gene3D" id="1.10.1030.10">
    <property type="entry name" value="Carbamoyl-phosphate synthetase, large subunit oligomerisation domain"/>
    <property type="match status" value="1"/>
</dbReference>
<dbReference type="Gene3D" id="3.40.50.1380">
    <property type="entry name" value="Methylglyoxal synthase-like domain"/>
    <property type="match status" value="1"/>
</dbReference>
<dbReference type="HAMAP" id="MF_01210_A">
    <property type="entry name" value="CPSase_L_chain_A"/>
    <property type="match status" value="1"/>
</dbReference>
<dbReference type="HAMAP" id="MF_01210_B">
    <property type="entry name" value="CPSase_L_chain_B"/>
    <property type="match status" value="1"/>
</dbReference>
<dbReference type="InterPro" id="IPR011761">
    <property type="entry name" value="ATP-grasp"/>
</dbReference>
<dbReference type="InterPro" id="IPR006275">
    <property type="entry name" value="CarbamoylP_synth_lsu"/>
</dbReference>
<dbReference type="InterPro" id="IPR005480">
    <property type="entry name" value="CarbamoylP_synth_lsu_oligo"/>
</dbReference>
<dbReference type="InterPro" id="IPR036897">
    <property type="entry name" value="CarbamoylP_synth_lsu_oligo_sf"/>
</dbReference>
<dbReference type="InterPro" id="IPR005479">
    <property type="entry name" value="CbamoylP_synth_lsu-like_ATP-bd"/>
</dbReference>
<dbReference type="InterPro" id="IPR005483">
    <property type="entry name" value="CbamoylP_synth_lsu_CPSase_dom"/>
</dbReference>
<dbReference type="InterPro" id="IPR011607">
    <property type="entry name" value="MGS-like_dom"/>
</dbReference>
<dbReference type="InterPro" id="IPR036914">
    <property type="entry name" value="MGS-like_dom_sf"/>
</dbReference>
<dbReference type="InterPro" id="IPR033937">
    <property type="entry name" value="MGS_CPS_CarB"/>
</dbReference>
<dbReference type="InterPro" id="IPR016185">
    <property type="entry name" value="PreATP-grasp_dom_sf"/>
</dbReference>
<dbReference type="NCBIfam" id="TIGR01369">
    <property type="entry name" value="CPSaseII_lrg"/>
    <property type="match status" value="1"/>
</dbReference>
<dbReference type="NCBIfam" id="NF003671">
    <property type="entry name" value="PRK05294.1"/>
    <property type="match status" value="1"/>
</dbReference>
<dbReference type="NCBIfam" id="NF009455">
    <property type="entry name" value="PRK12815.1"/>
    <property type="match status" value="1"/>
</dbReference>
<dbReference type="PANTHER" id="PTHR11405:SF53">
    <property type="entry name" value="CARBAMOYL-PHOSPHATE SYNTHASE [AMMONIA], MITOCHONDRIAL"/>
    <property type="match status" value="1"/>
</dbReference>
<dbReference type="PANTHER" id="PTHR11405">
    <property type="entry name" value="CARBAMOYLTRANSFERASE FAMILY MEMBER"/>
    <property type="match status" value="1"/>
</dbReference>
<dbReference type="Pfam" id="PF02786">
    <property type="entry name" value="CPSase_L_D2"/>
    <property type="match status" value="2"/>
</dbReference>
<dbReference type="Pfam" id="PF02787">
    <property type="entry name" value="CPSase_L_D3"/>
    <property type="match status" value="1"/>
</dbReference>
<dbReference type="Pfam" id="PF02142">
    <property type="entry name" value="MGS"/>
    <property type="match status" value="1"/>
</dbReference>
<dbReference type="PRINTS" id="PR00098">
    <property type="entry name" value="CPSASE"/>
</dbReference>
<dbReference type="SMART" id="SM01096">
    <property type="entry name" value="CPSase_L_D3"/>
    <property type="match status" value="1"/>
</dbReference>
<dbReference type="SMART" id="SM00851">
    <property type="entry name" value="MGS"/>
    <property type="match status" value="1"/>
</dbReference>
<dbReference type="SUPFAM" id="SSF48108">
    <property type="entry name" value="Carbamoyl phosphate synthetase, large subunit connection domain"/>
    <property type="match status" value="1"/>
</dbReference>
<dbReference type="SUPFAM" id="SSF56059">
    <property type="entry name" value="Glutathione synthetase ATP-binding domain-like"/>
    <property type="match status" value="2"/>
</dbReference>
<dbReference type="SUPFAM" id="SSF52335">
    <property type="entry name" value="Methylglyoxal synthase-like"/>
    <property type="match status" value="1"/>
</dbReference>
<dbReference type="SUPFAM" id="SSF52440">
    <property type="entry name" value="PreATP-grasp domain"/>
    <property type="match status" value="2"/>
</dbReference>
<dbReference type="PROSITE" id="PS50975">
    <property type="entry name" value="ATP_GRASP"/>
    <property type="match status" value="2"/>
</dbReference>
<dbReference type="PROSITE" id="PS00866">
    <property type="entry name" value="CPSASE_1"/>
    <property type="match status" value="1"/>
</dbReference>
<dbReference type="PROSITE" id="PS00867">
    <property type="entry name" value="CPSASE_2"/>
    <property type="match status" value="2"/>
</dbReference>
<dbReference type="PROSITE" id="PS51855">
    <property type="entry name" value="MGS"/>
    <property type="match status" value="1"/>
</dbReference>
<organism>
    <name type="scientific">Xylella fastidiosa (strain 9a5c)</name>
    <dbReference type="NCBI Taxonomy" id="160492"/>
    <lineage>
        <taxon>Bacteria</taxon>
        <taxon>Pseudomonadati</taxon>
        <taxon>Pseudomonadota</taxon>
        <taxon>Gammaproteobacteria</taxon>
        <taxon>Lysobacterales</taxon>
        <taxon>Lysobacteraceae</taxon>
        <taxon>Xylella</taxon>
    </lineage>
</organism>
<reference key="1">
    <citation type="journal article" date="2000" name="Nature">
        <title>The genome sequence of the plant pathogen Xylella fastidiosa.</title>
        <authorList>
            <person name="Simpson A.J.G."/>
            <person name="Reinach F.C."/>
            <person name="Arruda P."/>
            <person name="Abreu F.A."/>
            <person name="Acencio M."/>
            <person name="Alvarenga R."/>
            <person name="Alves L.M.C."/>
            <person name="Araya J.E."/>
            <person name="Baia G.S."/>
            <person name="Baptista C.S."/>
            <person name="Barros M.H."/>
            <person name="Bonaccorsi E.D."/>
            <person name="Bordin S."/>
            <person name="Bove J.M."/>
            <person name="Briones M.R.S."/>
            <person name="Bueno M.R.P."/>
            <person name="Camargo A.A."/>
            <person name="Camargo L.E.A."/>
            <person name="Carraro D.M."/>
            <person name="Carrer H."/>
            <person name="Colauto N.B."/>
            <person name="Colombo C."/>
            <person name="Costa F.F."/>
            <person name="Costa M.C.R."/>
            <person name="Costa-Neto C.M."/>
            <person name="Coutinho L.L."/>
            <person name="Cristofani M."/>
            <person name="Dias-Neto E."/>
            <person name="Docena C."/>
            <person name="El-Dorry H."/>
            <person name="Facincani A.P."/>
            <person name="Ferreira A.J.S."/>
            <person name="Ferreira V.C.A."/>
            <person name="Ferro J.A."/>
            <person name="Fraga J.S."/>
            <person name="Franca S.C."/>
            <person name="Franco M.C."/>
            <person name="Frohme M."/>
            <person name="Furlan L.R."/>
            <person name="Garnier M."/>
            <person name="Goldman G.H."/>
            <person name="Goldman M.H.S."/>
            <person name="Gomes S.L."/>
            <person name="Gruber A."/>
            <person name="Ho P.L."/>
            <person name="Hoheisel J.D."/>
            <person name="Junqueira M.L."/>
            <person name="Kemper E.L."/>
            <person name="Kitajima J.P."/>
            <person name="Krieger J.E."/>
            <person name="Kuramae E.E."/>
            <person name="Laigret F."/>
            <person name="Lambais M.R."/>
            <person name="Leite L.C.C."/>
            <person name="Lemos E.G.M."/>
            <person name="Lemos M.V.F."/>
            <person name="Lopes S.A."/>
            <person name="Lopes C.R."/>
            <person name="Machado J.A."/>
            <person name="Machado M.A."/>
            <person name="Madeira A.M.B.N."/>
            <person name="Madeira H.M.F."/>
            <person name="Marino C.L."/>
            <person name="Marques M.V."/>
            <person name="Martins E.A.L."/>
            <person name="Martins E.M.F."/>
            <person name="Matsukuma A.Y."/>
            <person name="Menck C.F.M."/>
            <person name="Miracca E.C."/>
            <person name="Miyaki C.Y."/>
            <person name="Monteiro-Vitorello C.B."/>
            <person name="Moon D.H."/>
            <person name="Nagai M.A."/>
            <person name="Nascimento A.L.T.O."/>
            <person name="Netto L.E.S."/>
            <person name="Nhani A. Jr."/>
            <person name="Nobrega F.G."/>
            <person name="Nunes L.R."/>
            <person name="Oliveira M.A."/>
            <person name="de Oliveira M.C."/>
            <person name="de Oliveira R.C."/>
            <person name="Palmieri D.A."/>
            <person name="Paris A."/>
            <person name="Peixoto B.R."/>
            <person name="Pereira G.A.G."/>
            <person name="Pereira H.A. Jr."/>
            <person name="Pesquero J.B."/>
            <person name="Quaggio R.B."/>
            <person name="Roberto P.G."/>
            <person name="Rodrigues V."/>
            <person name="de Rosa A.J.M."/>
            <person name="de Rosa V.E. Jr."/>
            <person name="de Sa R.G."/>
            <person name="Santelli R.V."/>
            <person name="Sawasaki H.E."/>
            <person name="da Silva A.C.R."/>
            <person name="da Silva A.M."/>
            <person name="da Silva F.R."/>
            <person name="Silva W.A. Jr."/>
            <person name="da Silveira J.F."/>
            <person name="Silvestri M.L.Z."/>
            <person name="Siqueira W.J."/>
            <person name="de Souza A.A."/>
            <person name="de Souza A.P."/>
            <person name="Terenzi M.F."/>
            <person name="Truffi D."/>
            <person name="Tsai S.M."/>
            <person name="Tsuhako M.H."/>
            <person name="Vallada H."/>
            <person name="Van Sluys M.A."/>
            <person name="Verjovski-Almeida S."/>
            <person name="Vettore A.L."/>
            <person name="Zago M.A."/>
            <person name="Zatz M."/>
            <person name="Meidanis J."/>
            <person name="Setubal J.C."/>
        </authorList>
    </citation>
    <scope>NUCLEOTIDE SEQUENCE [LARGE SCALE GENOMIC DNA]</scope>
    <source>
        <strain>9a5c</strain>
    </source>
</reference>
<sequence length="1080" mass="117385">MPKRTDLRTILIIGAGPIVIGQACEFDYSGAQACKALRAEGFRVVLVNSNPATIMTDPDMADAVYIEPIHWRTVEKIIAKEKPDALLPTMGGQTALNCALDLADHGVLEKYGVELIGAKREAIRMAEDRELFRVAMQEIGLECPKAEVAKSLERALEIQAKVGFPTIIRPSFTLGGTGGGITYNRQEFEEIIKRGLELSPVHEVLVEESVLGWKEFEMEVVRDASDNCIIVCSIENLDPMGVHTGDSITVAPAQTLSDKEYQRLRDASIAVLRKIGVDTGGSNVQFGIDPQTGRVVVIEMNPRVSRSSALASKATGFPIAKIAAKLAVGYTLDELKNEITGGKMPASFEPSIDYVVTKIPRFAFEKFPQADARLTTQMKSVGEVMAMGRTFAESLQKAVRGLETGKVGLEPTGLDLSSEDDLVVLKRELKAPGAERLFYVADAFRAGFAVADVYALSYIDPWFLDQIEEIVAAEGRLVTDGLGSIDGARLRQLKRIGFSDARIAQLTGTNEVAVRALRRVLKVKPVYKRVDSCAGEFATGTAYLYSTYEEECEAAPSDRRKIMILGGGPNRIGQGIEFDYCCVHAALALREDGFETIMVNCNPETVSTDYDTSDRLYFEPLTLEDVLEIVEVEHPVGVIVQYGGQTPLKLAKALEANGVPVIGTSPESIDLAEDRERFQKLVQQLGLRQPPNCTARTAEEALVLAREIGYPLVVRPSYVLGGRAMEIVYGEADLARYVRDAVKVSNDSPVLLDRFLDNAVEVDVDIIADREGQVLIGGVMEHIEEAGVHSGDSSCSLPPYSLSAATQDDLRRQVIRLAQALNVIGLMNTQFAIQSNDDGSDIVYLLEVNPRASRTVPFVSKATGVPLAKIAARCMTGKTLVEQSVTCEVVPAYYAVKEAIFPFAKLQGVDPILGPEMRSTGEVMGVGRSFAAAFARAQEAGDIRAPQPGRAFVSVRDPDKKRVLPVVLALVERGFGVVATAGTYAWLQQNGVACEVVNKVAEGRPHVVDLIKNGEIVYIINTTEGRAAIADSFSIRREALQHCVTYSTTIAGAKALVNSLEFRGTGPVWSLQELHKELQV</sequence>
<evidence type="ECO:0000255" key="1">
    <source>
        <dbReference type="HAMAP-Rule" id="MF_01210"/>
    </source>
</evidence>
<proteinExistence type="inferred from homology"/>
<protein>
    <recommendedName>
        <fullName evidence="1">Carbamoyl phosphate synthase large chain</fullName>
        <ecNumber evidence="1">6.3.4.16</ecNumber>
        <ecNumber evidence="1">6.3.5.5</ecNumber>
    </recommendedName>
    <alternativeName>
        <fullName evidence="1">Carbamoyl phosphate synthetase ammonia chain</fullName>
    </alternativeName>
</protein>
<gene>
    <name evidence="1" type="primary">carB</name>
    <name type="ordered locus">XF_1107</name>
</gene>